<keyword id="KW-0240">DNA-directed RNA polymerase</keyword>
<keyword id="KW-0460">Magnesium</keyword>
<keyword id="KW-0479">Metal-binding</keyword>
<keyword id="KW-0548">Nucleotidyltransferase</keyword>
<keyword id="KW-1185">Reference proteome</keyword>
<keyword id="KW-0804">Transcription</keyword>
<keyword id="KW-0808">Transferase</keyword>
<keyword id="KW-0862">Zinc</keyword>
<feature type="chain" id="PRO_0000067800" description="DNA-directed RNA polymerase subunit beta'">
    <location>
        <begin position="1"/>
        <end position="1207"/>
    </location>
</feature>
<feature type="binding site" evidence="1">
    <location>
        <position position="60"/>
    </location>
    <ligand>
        <name>Zn(2+)</name>
        <dbReference type="ChEBI" id="CHEBI:29105"/>
        <label>1</label>
    </ligand>
</feature>
<feature type="binding site" evidence="1">
    <location>
        <position position="62"/>
    </location>
    <ligand>
        <name>Zn(2+)</name>
        <dbReference type="ChEBI" id="CHEBI:29105"/>
        <label>1</label>
    </ligand>
</feature>
<feature type="binding site" evidence="1">
    <location>
        <position position="75"/>
    </location>
    <ligand>
        <name>Zn(2+)</name>
        <dbReference type="ChEBI" id="CHEBI:29105"/>
        <label>1</label>
    </ligand>
</feature>
<feature type="binding site" evidence="1">
    <location>
        <position position="78"/>
    </location>
    <ligand>
        <name>Zn(2+)</name>
        <dbReference type="ChEBI" id="CHEBI:29105"/>
        <label>1</label>
    </ligand>
</feature>
<feature type="binding site" evidence="1">
    <location>
        <position position="449"/>
    </location>
    <ligand>
        <name>Mg(2+)</name>
        <dbReference type="ChEBI" id="CHEBI:18420"/>
    </ligand>
</feature>
<feature type="binding site" evidence="1">
    <location>
        <position position="451"/>
    </location>
    <ligand>
        <name>Mg(2+)</name>
        <dbReference type="ChEBI" id="CHEBI:18420"/>
    </ligand>
</feature>
<feature type="binding site" evidence="1">
    <location>
        <position position="453"/>
    </location>
    <ligand>
        <name>Mg(2+)</name>
        <dbReference type="ChEBI" id="CHEBI:18420"/>
    </ligand>
</feature>
<feature type="binding site" evidence="1">
    <location>
        <position position="822"/>
    </location>
    <ligand>
        <name>Zn(2+)</name>
        <dbReference type="ChEBI" id="CHEBI:29105"/>
        <label>2</label>
    </ligand>
</feature>
<feature type="binding site" evidence="1">
    <location>
        <position position="896"/>
    </location>
    <ligand>
        <name>Zn(2+)</name>
        <dbReference type="ChEBI" id="CHEBI:29105"/>
        <label>2</label>
    </ligand>
</feature>
<feature type="binding site" evidence="1">
    <location>
        <position position="903"/>
    </location>
    <ligand>
        <name>Zn(2+)</name>
        <dbReference type="ChEBI" id="CHEBI:29105"/>
        <label>2</label>
    </ligand>
</feature>
<feature type="binding site" evidence="1">
    <location>
        <position position="906"/>
    </location>
    <ligand>
        <name>Zn(2+)</name>
        <dbReference type="ChEBI" id="CHEBI:29105"/>
        <label>2</label>
    </ligand>
</feature>
<gene>
    <name evidence="1" type="primary">rpoC</name>
    <name type="ordered locus">SERP0184</name>
</gene>
<proteinExistence type="inferred from homology"/>
<evidence type="ECO:0000255" key="1">
    <source>
        <dbReference type="HAMAP-Rule" id="MF_01322"/>
    </source>
</evidence>
<reference key="1">
    <citation type="journal article" date="2005" name="J. Bacteriol.">
        <title>Insights on evolution of virulence and resistance from the complete genome analysis of an early methicillin-resistant Staphylococcus aureus strain and a biofilm-producing methicillin-resistant Staphylococcus epidermidis strain.</title>
        <authorList>
            <person name="Gill S.R."/>
            <person name="Fouts D.E."/>
            <person name="Archer G.L."/>
            <person name="Mongodin E.F."/>
            <person name="DeBoy R.T."/>
            <person name="Ravel J."/>
            <person name="Paulsen I.T."/>
            <person name="Kolonay J.F."/>
            <person name="Brinkac L.M."/>
            <person name="Beanan M.J."/>
            <person name="Dodson R.J."/>
            <person name="Daugherty S.C."/>
            <person name="Madupu R."/>
            <person name="Angiuoli S.V."/>
            <person name="Durkin A.S."/>
            <person name="Haft D.H."/>
            <person name="Vamathevan J.J."/>
            <person name="Khouri H."/>
            <person name="Utterback T.R."/>
            <person name="Lee C."/>
            <person name="Dimitrov G."/>
            <person name="Jiang L."/>
            <person name="Qin H."/>
            <person name="Weidman J."/>
            <person name="Tran K."/>
            <person name="Kang K.H."/>
            <person name="Hance I.R."/>
            <person name="Nelson K.E."/>
            <person name="Fraser C.M."/>
        </authorList>
    </citation>
    <scope>NUCLEOTIDE SEQUENCE [LARGE SCALE GENOMIC DNA]</scope>
    <source>
        <strain>ATCC 35984 / DSM 28319 / BCRC 17069 / CCUG 31568 / BM 3577 / RP62A</strain>
    </source>
</reference>
<comment type="function">
    <text evidence="1">DNA-dependent RNA polymerase catalyzes the transcription of DNA into RNA using the four ribonucleoside triphosphates as substrates.</text>
</comment>
<comment type="catalytic activity">
    <reaction evidence="1">
        <text>RNA(n) + a ribonucleoside 5'-triphosphate = RNA(n+1) + diphosphate</text>
        <dbReference type="Rhea" id="RHEA:21248"/>
        <dbReference type="Rhea" id="RHEA-COMP:14527"/>
        <dbReference type="Rhea" id="RHEA-COMP:17342"/>
        <dbReference type="ChEBI" id="CHEBI:33019"/>
        <dbReference type="ChEBI" id="CHEBI:61557"/>
        <dbReference type="ChEBI" id="CHEBI:140395"/>
        <dbReference type="EC" id="2.7.7.6"/>
    </reaction>
</comment>
<comment type="cofactor">
    <cofactor evidence="1">
        <name>Mg(2+)</name>
        <dbReference type="ChEBI" id="CHEBI:18420"/>
    </cofactor>
    <text evidence="1">Binds 1 Mg(2+) ion per subunit.</text>
</comment>
<comment type="cofactor">
    <cofactor evidence="1">
        <name>Zn(2+)</name>
        <dbReference type="ChEBI" id="CHEBI:29105"/>
    </cofactor>
    <text evidence="1">Binds 2 Zn(2+) ions per subunit.</text>
</comment>
<comment type="subunit">
    <text evidence="1">The RNAP catalytic core consists of 2 alpha, 1 beta, 1 beta' and 1 omega subunit. When a sigma factor is associated with the core the holoenzyme is formed, which can initiate transcription.</text>
</comment>
<comment type="similarity">
    <text evidence="1">Belongs to the RNA polymerase beta' chain family.</text>
</comment>
<organism>
    <name type="scientific">Staphylococcus epidermidis (strain ATCC 35984 / DSM 28319 / BCRC 17069 / CCUG 31568 / BM 3577 / RP62A)</name>
    <dbReference type="NCBI Taxonomy" id="176279"/>
    <lineage>
        <taxon>Bacteria</taxon>
        <taxon>Bacillati</taxon>
        <taxon>Bacillota</taxon>
        <taxon>Bacilli</taxon>
        <taxon>Bacillales</taxon>
        <taxon>Staphylococcaceae</taxon>
        <taxon>Staphylococcus</taxon>
    </lineage>
</organism>
<name>RPOC_STAEQ</name>
<accession>Q5HRK9</accession>
<dbReference type="EC" id="2.7.7.6" evidence="1"/>
<dbReference type="EMBL" id="CP000029">
    <property type="protein sequence ID" value="AAW53581.1"/>
    <property type="molecule type" value="Genomic_DNA"/>
</dbReference>
<dbReference type="SMR" id="Q5HRK9"/>
<dbReference type="STRING" id="176279.SERP0184"/>
<dbReference type="KEGG" id="ser:SERP0184"/>
<dbReference type="eggNOG" id="COG0086">
    <property type="taxonomic scope" value="Bacteria"/>
</dbReference>
<dbReference type="HOGENOM" id="CLU_000524_3_1_9"/>
<dbReference type="Proteomes" id="UP000000531">
    <property type="component" value="Chromosome"/>
</dbReference>
<dbReference type="GO" id="GO:0000428">
    <property type="term" value="C:DNA-directed RNA polymerase complex"/>
    <property type="evidence" value="ECO:0007669"/>
    <property type="project" value="UniProtKB-KW"/>
</dbReference>
<dbReference type="GO" id="GO:0003677">
    <property type="term" value="F:DNA binding"/>
    <property type="evidence" value="ECO:0007669"/>
    <property type="project" value="UniProtKB-UniRule"/>
</dbReference>
<dbReference type="GO" id="GO:0003899">
    <property type="term" value="F:DNA-directed RNA polymerase activity"/>
    <property type="evidence" value="ECO:0007669"/>
    <property type="project" value="UniProtKB-UniRule"/>
</dbReference>
<dbReference type="GO" id="GO:0000287">
    <property type="term" value="F:magnesium ion binding"/>
    <property type="evidence" value="ECO:0007669"/>
    <property type="project" value="UniProtKB-UniRule"/>
</dbReference>
<dbReference type="GO" id="GO:0008270">
    <property type="term" value="F:zinc ion binding"/>
    <property type="evidence" value="ECO:0007669"/>
    <property type="project" value="UniProtKB-UniRule"/>
</dbReference>
<dbReference type="GO" id="GO:0006351">
    <property type="term" value="P:DNA-templated transcription"/>
    <property type="evidence" value="ECO:0007669"/>
    <property type="project" value="UniProtKB-UniRule"/>
</dbReference>
<dbReference type="CDD" id="cd02655">
    <property type="entry name" value="RNAP_beta'_C"/>
    <property type="match status" value="1"/>
</dbReference>
<dbReference type="CDD" id="cd01609">
    <property type="entry name" value="RNAP_beta'_N"/>
    <property type="match status" value="1"/>
</dbReference>
<dbReference type="FunFam" id="1.10.132.30:FF:000003">
    <property type="entry name" value="DNA-directed RNA polymerase subunit beta"/>
    <property type="match status" value="1"/>
</dbReference>
<dbReference type="FunFam" id="1.10.150.390:FF:000002">
    <property type="entry name" value="DNA-directed RNA polymerase subunit beta"/>
    <property type="match status" value="1"/>
</dbReference>
<dbReference type="FunFam" id="4.10.860.120:FF:000001">
    <property type="entry name" value="DNA-directed RNA polymerase subunit beta"/>
    <property type="match status" value="1"/>
</dbReference>
<dbReference type="Gene3D" id="1.10.132.30">
    <property type="match status" value="1"/>
</dbReference>
<dbReference type="Gene3D" id="1.10.150.390">
    <property type="match status" value="1"/>
</dbReference>
<dbReference type="Gene3D" id="1.10.1790.20">
    <property type="match status" value="1"/>
</dbReference>
<dbReference type="Gene3D" id="1.10.40.90">
    <property type="match status" value="1"/>
</dbReference>
<dbReference type="Gene3D" id="2.40.40.20">
    <property type="match status" value="1"/>
</dbReference>
<dbReference type="Gene3D" id="2.40.50.100">
    <property type="match status" value="1"/>
</dbReference>
<dbReference type="Gene3D" id="4.10.860.120">
    <property type="entry name" value="RNA polymerase II, clamp domain"/>
    <property type="match status" value="1"/>
</dbReference>
<dbReference type="Gene3D" id="1.10.274.100">
    <property type="entry name" value="RNA polymerase Rpb1, domain 3"/>
    <property type="match status" value="1"/>
</dbReference>
<dbReference type="HAMAP" id="MF_01322">
    <property type="entry name" value="RNApol_bact_RpoC"/>
    <property type="match status" value="1"/>
</dbReference>
<dbReference type="InterPro" id="IPR045867">
    <property type="entry name" value="DNA-dir_RpoC_beta_prime"/>
</dbReference>
<dbReference type="InterPro" id="IPR012754">
    <property type="entry name" value="DNA-dir_RpoC_beta_prime_bact"/>
</dbReference>
<dbReference type="InterPro" id="IPR000722">
    <property type="entry name" value="RNA_pol_asu"/>
</dbReference>
<dbReference type="InterPro" id="IPR006592">
    <property type="entry name" value="RNA_pol_N"/>
</dbReference>
<dbReference type="InterPro" id="IPR007080">
    <property type="entry name" value="RNA_pol_Rpb1_1"/>
</dbReference>
<dbReference type="InterPro" id="IPR007066">
    <property type="entry name" value="RNA_pol_Rpb1_3"/>
</dbReference>
<dbReference type="InterPro" id="IPR042102">
    <property type="entry name" value="RNA_pol_Rpb1_3_sf"/>
</dbReference>
<dbReference type="InterPro" id="IPR007083">
    <property type="entry name" value="RNA_pol_Rpb1_4"/>
</dbReference>
<dbReference type="InterPro" id="IPR007081">
    <property type="entry name" value="RNA_pol_Rpb1_5"/>
</dbReference>
<dbReference type="InterPro" id="IPR044893">
    <property type="entry name" value="RNA_pol_Rpb1_clamp_domain"/>
</dbReference>
<dbReference type="InterPro" id="IPR038120">
    <property type="entry name" value="Rpb1_funnel_sf"/>
</dbReference>
<dbReference type="NCBIfam" id="TIGR02386">
    <property type="entry name" value="rpoC_TIGR"/>
    <property type="match status" value="1"/>
</dbReference>
<dbReference type="PANTHER" id="PTHR19376">
    <property type="entry name" value="DNA-DIRECTED RNA POLYMERASE"/>
    <property type="match status" value="1"/>
</dbReference>
<dbReference type="PANTHER" id="PTHR19376:SF54">
    <property type="entry name" value="DNA-DIRECTED RNA POLYMERASE SUBUNIT BETA"/>
    <property type="match status" value="1"/>
</dbReference>
<dbReference type="Pfam" id="PF04997">
    <property type="entry name" value="RNA_pol_Rpb1_1"/>
    <property type="match status" value="1"/>
</dbReference>
<dbReference type="Pfam" id="PF00623">
    <property type="entry name" value="RNA_pol_Rpb1_2"/>
    <property type="match status" value="1"/>
</dbReference>
<dbReference type="Pfam" id="PF04983">
    <property type="entry name" value="RNA_pol_Rpb1_3"/>
    <property type="match status" value="1"/>
</dbReference>
<dbReference type="Pfam" id="PF05000">
    <property type="entry name" value="RNA_pol_Rpb1_4"/>
    <property type="match status" value="1"/>
</dbReference>
<dbReference type="Pfam" id="PF04998">
    <property type="entry name" value="RNA_pol_Rpb1_5"/>
    <property type="match status" value="1"/>
</dbReference>
<dbReference type="SMART" id="SM00663">
    <property type="entry name" value="RPOLA_N"/>
    <property type="match status" value="1"/>
</dbReference>
<dbReference type="SUPFAM" id="SSF64484">
    <property type="entry name" value="beta and beta-prime subunits of DNA dependent RNA-polymerase"/>
    <property type="match status" value="1"/>
</dbReference>
<protein>
    <recommendedName>
        <fullName evidence="1">DNA-directed RNA polymerase subunit beta'</fullName>
        <shortName evidence="1">RNAP subunit beta'</shortName>
        <ecNumber evidence="1">2.7.7.6</ecNumber>
    </recommendedName>
    <alternativeName>
        <fullName evidence="1">RNA polymerase subunit beta'</fullName>
    </alternativeName>
    <alternativeName>
        <fullName evidence="1">Transcriptase subunit beta'</fullName>
    </alternativeName>
</protein>
<sequence length="1207" mass="135263">MIDVNNFHYMKIGLASPEKIRSWSYGEVKKPETINYRTLKPEKDGLFCERIFGPTKDWECSCGKYKRVRYKGMVCDRCGVEVTKSKVRRERMGHIELAAPVSHIWYFKGIPSRMGLLLDMSPRALEEVIYFASYVVVDPGPTGLEKKTLLSEAEFREYYDKYPNQFVAKMGAEGIKDLLEEIDLDEELKELRDELESATGQRLTRAIKRLEVVESFRNSGNNPSWMILDVLPIIPPEIRPMVQLDGGRFATSDLNDLYRRVINRNNRLKRLLDLGAPGIIVQNEKRMLQEAVDALIDNGRRGRPVTGPGNRPLKSLSHMLKGKQGRFRQNLLGKRVDYSGRSVIAVGPSLKMYQCGLPKEMALELFKPFVMKELVQREIATNIKNAKSKIERMDDEVWDVLEDVITEHPVLLNRAPTLHRLGIQAFEPTLVEGRAIRLHPLVTTAYNADFDGDQMAVHVPLSKEAQAEARMLMLAAQNILNPKDGKPVVTPSQDMVLGNYYLTLERKDAVNTGAIFNDTNEVLKAYANGYVHLHTRIGVHANSFNNPTFTDEQNSKILATSVGKIIFNEIIPDSFAYINEPSQANLERTTPDKYFVDPTQLGEGGLKEYFDNTELIEPFNKKFLGNIIAEVFNRFSITDTSMMLDRMKDLGFKFSSKAGITVGVSDIVVLPDKQDILDEHEKLVERVTKQYNRGLITEDERYNAVVEIWTDAKDQIQGELMQSLEKTNPIFMMSDSGARGNASNFTQLAGMRGLMAAPSGKIIELPITSSFREGLTVLEYFISTHGARKGLADTALKTADSGYLTRRLVDVAQDVIVREEDCGTDRGLLVSDIKEGTEMIEPFIERIEGRYSKETIRHPETDEVIIRPDELITPDIAKQITDAGIEQMYIRSAFTCNTRHGVCEKCYGKNLATGEKVEVGEAVGTIAAQSIGEPGTQLTMRTFHTGGVAGSDITQGLPRIQEIFEARNPKGQAVITEIEGVVDDIKLAKDRQQEIIVKGANETRSYLASGTSRLKVEIGQSVERGEVLTEGSIEPKNYLSVAGLNATESYLLKEVQKVYRMQGVEIDDKHVEVMVRQMLRKVRIIEAGDTKLLPGSLVDIHNFTDANRDAFKHRKRPATAKPVLLGITKASLETESFLSAASFQETTRVLTDAAIKGKRDDLLGLKENVIIGKLIPAGTGMRRYSDIQYDKATAPVTETSEEVETIE</sequence>